<accession>Q5QD74</accession>
<evidence type="ECO:0000250" key="1"/>
<evidence type="ECO:0000250" key="2">
    <source>
        <dbReference type="UniProtKB" id="P00157"/>
    </source>
</evidence>
<evidence type="ECO:0000255" key="3">
    <source>
        <dbReference type="PROSITE-ProRule" id="PRU00967"/>
    </source>
</evidence>
<evidence type="ECO:0000255" key="4">
    <source>
        <dbReference type="PROSITE-ProRule" id="PRU00968"/>
    </source>
</evidence>
<proteinExistence type="inferred from homology"/>
<feature type="chain" id="PRO_0000254665" description="Cytochrome b">
    <location>
        <begin position="1"/>
        <end position="379"/>
    </location>
</feature>
<feature type="transmembrane region" description="Helical" evidence="2">
    <location>
        <begin position="33"/>
        <end position="53"/>
    </location>
</feature>
<feature type="transmembrane region" description="Helical" evidence="2">
    <location>
        <begin position="77"/>
        <end position="98"/>
    </location>
</feature>
<feature type="transmembrane region" description="Helical" evidence="2">
    <location>
        <begin position="113"/>
        <end position="133"/>
    </location>
</feature>
<feature type="transmembrane region" description="Helical" evidence="2">
    <location>
        <begin position="178"/>
        <end position="198"/>
    </location>
</feature>
<feature type="transmembrane region" description="Helical" evidence="2">
    <location>
        <begin position="226"/>
        <end position="246"/>
    </location>
</feature>
<feature type="transmembrane region" description="Helical" evidence="2">
    <location>
        <begin position="288"/>
        <end position="308"/>
    </location>
</feature>
<feature type="transmembrane region" description="Helical" evidence="2">
    <location>
        <begin position="320"/>
        <end position="340"/>
    </location>
</feature>
<feature type="transmembrane region" description="Helical" evidence="2">
    <location>
        <begin position="347"/>
        <end position="367"/>
    </location>
</feature>
<feature type="binding site" description="axial binding residue" evidence="2">
    <location>
        <position position="83"/>
    </location>
    <ligand>
        <name>heme b</name>
        <dbReference type="ChEBI" id="CHEBI:60344"/>
        <label>b562</label>
    </ligand>
    <ligandPart>
        <name>Fe</name>
        <dbReference type="ChEBI" id="CHEBI:18248"/>
    </ligandPart>
</feature>
<feature type="binding site" description="axial binding residue" evidence="2">
    <location>
        <position position="97"/>
    </location>
    <ligand>
        <name>heme b</name>
        <dbReference type="ChEBI" id="CHEBI:60344"/>
        <label>b566</label>
    </ligand>
    <ligandPart>
        <name>Fe</name>
        <dbReference type="ChEBI" id="CHEBI:18248"/>
    </ligandPart>
</feature>
<feature type="binding site" description="axial binding residue" evidence="2">
    <location>
        <position position="182"/>
    </location>
    <ligand>
        <name>heme b</name>
        <dbReference type="ChEBI" id="CHEBI:60344"/>
        <label>b562</label>
    </ligand>
    <ligandPart>
        <name>Fe</name>
        <dbReference type="ChEBI" id="CHEBI:18248"/>
    </ligandPart>
</feature>
<feature type="binding site" description="axial binding residue" evidence="2">
    <location>
        <position position="196"/>
    </location>
    <ligand>
        <name>heme b</name>
        <dbReference type="ChEBI" id="CHEBI:60344"/>
        <label>b566</label>
    </ligand>
    <ligandPart>
        <name>Fe</name>
        <dbReference type="ChEBI" id="CHEBI:18248"/>
    </ligandPart>
</feature>
<feature type="binding site" evidence="2">
    <location>
        <position position="201"/>
    </location>
    <ligand>
        <name>a ubiquinone</name>
        <dbReference type="ChEBI" id="CHEBI:16389"/>
    </ligand>
</feature>
<name>CYB_BOSSA</name>
<geneLocation type="mitochondrion"/>
<comment type="function">
    <text evidence="2">Component of the ubiquinol-cytochrome c reductase complex (complex III or cytochrome b-c1 complex) that is part of the mitochondrial respiratory chain. The b-c1 complex mediates electron transfer from ubiquinol to cytochrome c. Contributes to the generation of a proton gradient across the mitochondrial membrane that is then used for ATP synthesis.</text>
</comment>
<comment type="cofactor">
    <cofactor evidence="2">
        <name>heme b</name>
        <dbReference type="ChEBI" id="CHEBI:60344"/>
    </cofactor>
    <text evidence="2">Binds 2 heme b groups non-covalently.</text>
</comment>
<comment type="subunit">
    <text evidence="2">The cytochrome bc1 complex contains 11 subunits: 3 respiratory subunits (MT-CYB, CYC1 and UQCRFS1), 2 core proteins (UQCRC1 and UQCRC2) and 6 low-molecular weight proteins (UQCRH/QCR6, UQCRB/QCR7, UQCRQ/QCR8, UQCR10/QCR9, UQCR11/QCR10 and a cleavage product of UQCRFS1). This cytochrome bc1 complex then forms a dimer.</text>
</comment>
<comment type="subcellular location">
    <subcellularLocation>
        <location evidence="2">Mitochondrion inner membrane</location>
        <topology evidence="2">Multi-pass membrane protein</topology>
    </subcellularLocation>
</comment>
<comment type="miscellaneous">
    <text evidence="1">Heme 1 (or BL or b562) is low-potential and absorbs at about 562 nm, and heme 2 (or BH or b566) is high-potential and absorbs at about 566 nm.</text>
</comment>
<comment type="similarity">
    <text evidence="3 4">Belongs to the cytochrome b family.</text>
</comment>
<comment type="caution">
    <text evidence="2">The full-length protein contains only eight transmembrane helices, not nine as predicted by bioinformatics tools.</text>
</comment>
<sequence>MTNIRKSHPLMKIVNNAFIDLPAPPNISSWWNFGSLLGVCLILQILTGLFLAMHYTSDTTTAFSSVTHICRDVNYGWIIRYMHANGASMFFICLYMHVGRGLYYGSYTFLETWNIGVILLITVMATAFMGYVLPWGQMSFWGATVITNLLSAIPYIGTNLVEWIWGGFSVDKATLTRFFAFHFILPFIIAAIAMVHLLFLHETGSNNPTGVSSDVDKIPFHPYYTIKDTLGALLLILALMLLVLFAPDLLGDPDNYTPANPLNTPPHIKPEWYFLFAYAILRSIPNKLGGVLALAFSILILILIPLLHTSKQRSMMFRPLSQCLFWTLVADLLTLTWIGGQPVEHPYTTIGQLASIMYFLLILVLMPTAGTVENKLLKW</sequence>
<protein>
    <recommendedName>
        <fullName>Cytochrome b</fullName>
    </recommendedName>
    <alternativeName>
        <fullName>Complex III subunit 3</fullName>
    </alternativeName>
    <alternativeName>
        <fullName>Complex III subunit III</fullName>
    </alternativeName>
    <alternativeName>
        <fullName>Cytochrome b-c1 complex subunit 3</fullName>
    </alternativeName>
    <alternativeName>
        <fullName>Ubiquinol-cytochrome-c reductase complex cytochrome b subunit</fullName>
    </alternativeName>
</protein>
<keyword id="KW-0249">Electron transport</keyword>
<keyword id="KW-0349">Heme</keyword>
<keyword id="KW-0408">Iron</keyword>
<keyword id="KW-0472">Membrane</keyword>
<keyword id="KW-0479">Metal-binding</keyword>
<keyword id="KW-0496">Mitochondrion</keyword>
<keyword id="KW-0999">Mitochondrion inner membrane</keyword>
<keyword id="KW-0679">Respiratory chain</keyword>
<keyword id="KW-0812">Transmembrane</keyword>
<keyword id="KW-1133">Transmembrane helix</keyword>
<keyword id="KW-0813">Transport</keyword>
<keyword id="KW-0830">Ubiquinone</keyword>
<dbReference type="EMBL" id="AY689189">
    <property type="protein sequence ID" value="AAV51239.1"/>
    <property type="molecule type" value="Genomic_DNA"/>
</dbReference>
<dbReference type="SMR" id="Q5QD74"/>
<dbReference type="GO" id="GO:0005743">
    <property type="term" value="C:mitochondrial inner membrane"/>
    <property type="evidence" value="ECO:0007669"/>
    <property type="project" value="UniProtKB-SubCell"/>
</dbReference>
<dbReference type="GO" id="GO:0045275">
    <property type="term" value="C:respiratory chain complex III"/>
    <property type="evidence" value="ECO:0007669"/>
    <property type="project" value="InterPro"/>
</dbReference>
<dbReference type="GO" id="GO:0046872">
    <property type="term" value="F:metal ion binding"/>
    <property type="evidence" value="ECO:0007669"/>
    <property type="project" value="UniProtKB-KW"/>
</dbReference>
<dbReference type="GO" id="GO:0008121">
    <property type="term" value="F:ubiquinol-cytochrome-c reductase activity"/>
    <property type="evidence" value="ECO:0007669"/>
    <property type="project" value="InterPro"/>
</dbReference>
<dbReference type="GO" id="GO:0006122">
    <property type="term" value="P:mitochondrial electron transport, ubiquinol to cytochrome c"/>
    <property type="evidence" value="ECO:0007669"/>
    <property type="project" value="TreeGrafter"/>
</dbReference>
<dbReference type="CDD" id="cd00290">
    <property type="entry name" value="cytochrome_b_C"/>
    <property type="match status" value="1"/>
</dbReference>
<dbReference type="CDD" id="cd00284">
    <property type="entry name" value="Cytochrome_b_N"/>
    <property type="match status" value="1"/>
</dbReference>
<dbReference type="FunFam" id="1.20.810.10:FF:000002">
    <property type="entry name" value="Cytochrome b"/>
    <property type="match status" value="1"/>
</dbReference>
<dbReference type="Gene3D" id="1.20.810.10">
    <property type="entry name" value="Cytochrome Bc1 Complex, Chain C"/>
    <property type="match status" value="1"/>
</dbReference>
<dbReference type="InterPro" id="IPR005798">
    <property type="entry name" value="Cyt_b/b6_C"/>
</dbReference>
<dbReference type="InterPro" id="IPR036150">
    <property type="entry name" value="Cyt_b/b6_C_sf"/>
</dbReference>
<dbReference type="InterPro" id="IPR005797">
    <property type="entry name" value="Cyt_b/b6_N"/>
</dbReference>
<dbReference type="InterPro" id="IPR027387">
    <property type="entry name" value="Cytb/b6-like_sf"/>
</dbReference>
<dbReference type="InterPro" id="IPR030689">
    <property type="entry name" value="Cytochrome_b"/>
</dbReference>
<dbReference type="InterPro" id="IPR048260">
    <property type="entry name" value="Cytochrome_b_C_euk/bac"/>
</dbReference>
<dbReference type="InterPro" id="IPR048259">
    <property type="entry name" value="Cytochrome_b_N_euk/bac"/>
</dbReference>
<dbReference type="InterPro" id="IPR016174">
    <property type="entry name" value="Di-haem_cyt_TM"/>
</dbReference>
<dbReference type="PANTHER" id="PTHR19271">
    <property type="entry name" value="CYTOCHROME B"/>
    <property type="match status" value="1"/>
</dbReference>
<dbReference type="PANTHER" id="PTHR19271:SF16">
    <property type="entry name" value="CYTOCHROME B"/>
    <property type="match status" value="1"/>
</dbReference>
<dbReference type="Pfam" id="PF00032">
    <property type="entry name" value="Cytochrom_B_C"/>
    <property type="match status" value="1"/>
</dbReference>
<dbReference type="Pfam" id="PF00033">
    <property type="entry name" value="Cytochrome_B"/>
    <property type="match status" value="1"/>
</dbReference>
<dbReference type="PIRSF" id="PIRSF038885">
    <property type="entry name" value="COB"/>
    <property type="match status" value="1"/>
</dbReference>
<dbReference type="SUPFAM" id="SSF81648">
    <property type="entry name" value="a domain/subunit of cytochrome bc1 complex (Ubiquinol-cytochrome c reductase)"/>
    <property type="match status" value="1"/>
</dbReference>
<dbReference type="SUPFAM" id="SSF81342">
    <property type="entry name" value="Transmembrane di-heme cytochromes"/>
    <property type="match status" value="1"/>
</dbReference>
<dbReference type="PROSITE" id="PS51003">
    <property type="entry name" value="CYTB_CTER"/>
    <property type="match status" value="1"/>
</dbReference>
<dbReference type="PROSITE" id="PS51002">
    <property type="entry name" value="CYTB_NTER"/>
    <property type="match status" value="1"/>
</dbReference>
<reference key="1">
    <citation type="journal article" date="2004" name="Mol. Phylogenet. Evol.">
        <title>Molecular phylogeny of the tribe Bovini (Bovidae, Bovinae) and the taxonomic status of the Kouprey, Bos sauveli Urbain 1937.</title>
        <authorList>
            <person name="Hassanin A."/>
            <person name="Ropiquet A."/>
        </authorList>
    </citation>
    <scope>NUCLEOTIDE SEQUENCE [GENOMIC DNA]</scope>
</reference>
<gene>
    <name type="primary">MT-CYB</name>
    <name type="synonym">COB</name>
    <name type="synonym">CYTB</name>
    <name type="synonym">MTCYB</name>
</gene>
<organism>
    <name type="scientific">Bos sauveli</name>
    <name type="common">Kouprey</name>
    <dbReference type="NCBI Taxonomy" id="135829"/>
    <lineage>
        <taxon>Eukaryota</taxon>
        <taxon>Metazoa</taxon>
        <taxon>Chordata</taxon>
        <taxon>Craniata</taxon>
        <taxon>Vertebrata</taxon>
        <taxon>Euteleostomi</taxon>
        <taxon>Mammalia</taxon>
        <taxon>Eutheria</taxon>
        <taxon>Laurasiatheria</taxon>
        <taxon>Artiodactyla</taxon>
        <taxon>Ruminantia</taxon>
        <taxon>Pecora</taxon>
        <taxon>Bovidae</taxon>
        <taxon>Bovinae</taxon>
        <taxon>Bos</taxon>
    </lineage>
</organism>